<accession>A7MGX8</accession>
<keyword id="KW-0001">2Fe-2S</keyword>
<keyword id="KW-0963">Cytoplasm</keyword>
<keyword id="KW-0408">Iron</keyword>
<keyword id="KW-0411">Iron-sulfur</keyword>
<keyword id="KW-0479">Metal-binding</keyword>
<keyword id="KW-0663">Pyridoxal phosphate</keyword>
<keyword id="KW-1185">Reference proteome</keyword>
<keyword id="KW-0808">Transferase</keyword>
<comment type="function">
    <text evidence="1">Master enzyme that delivers sulfur to a number of partners involved in Fe-S cluster assembly, tRNA modification or cofactor biosynthesis. Catalyzes the removal of elemental sulfur atoms from cysteine to produce alanine. Functions as a sulfur delivery protein for Fe-S cluster synthesis onto IscU, an Fe-S scaffold assembly protein, as well as other S acceptor proteins.</text>
</comment>
<comment type="catalytic activity">
    <reaction evidence="1">
        <text>(sulfur carrier)-H + L-cysteine = (sulfur carrier)-SH + L-alanine</text>
        <dbReference type="Rhea" id="RHEA:43892"/>
        <dbReference type="Rhea" id="RHEA-COMP:14737"/>
        <dbReference type="Rhea" id="RHEA-COMP:14739"/>
        <dbReference type="ChEBI" id="CHEBI:29917"/>
        <dbReference type="ChEBI" id="CHEBI:35235"/>
        <dbReference type="ChEBI" id="CHEBI:57972"/>
        <dbReference type="ChEBI" id="CHEBI:64428"/>
        <dbReference type="EC" id="2.8.1.7"/>
    </reaction>
</comment>
<comment type="cofactor">
    <cofactor evidence="1">
        <name>pyridoxal 5'-phosphate</name>
        <dbReference type="ChEBI" id="CHEBI:597326"/>
    </cofactor>
</comment>
<comment type="pathway">
    <text evidence="1">Cofactor biosynthesis; iron-sulfur cluster biosynthesis.</text>
</comment>
<comment type="subunit">
    <text evidence="1">Homodimer. Forms a heterotetramer with IscU, interacts with other sulfur acceptors.</text>
</comment>
<comment type="subcellular location">
    <subcellularLocation>
        <location evidence="1">Cytoplasm</location>
    </subcellularLocation>
</comment>
<comment type="similarity">
    <text evidence="1">Belongs to the class-V pyridoxal-phosphate-dependent aminotransferase family. NifS/IscS subfamily.</text>
</comment>
<feature type="chain" id="PRO_1000019409" description="Cysteine desulfurase IscS">
    <location>
        <begin position="1"/>
        <end position="404"/>
    </location>
</feature>
<feature type="active site" description="Cysteine persulfide intermediate" evidence="1">
    <location>
        <position position="328"/>
    </location>
</feature>
<feature type="binding site" evidence="1">
    <location>
        <begin position="75"/>
        <end position="76"/>
    </location>
    <ligand>
        <name>pyridoxal 5'-phosphate</name>
        <dbReference type="ChEBI" id="CHEBI:597326"/>
    </ligand>
</feature>
<feature type="binding site" evidence="1">
    <location>
        <position position="155"/>
    </location>
    <ligand>
        <name>pyridoxal 5'-phosphate</name>
        <dbReference type="ChEBI" id="CHEBI:597326"/>
    </ligand>
</feature>
<feature type="binding site" evidence="1">
    <location>
        <position position="183"/>
    </location>
    <ligand>
        <name>pyridoxal 5'-phosphate</name>
        <dbReference type="ChEBI" id="CHEBI:597326"/>
    </ligand>
</feature>
<feature type="binding site" evidence="1">
    <location>
        <begin position="203"/>
        <end position="205"/>
    </location>
    <ligand>
        <name>pyridoxal 5'-phosphate</name>
        <dbReference type="ChEBI" id="CHEBI:597326"/>
    </ligand>
</feature>
<feature type="binding site" evidence="1">
    <location>
        <position position="243"/>
    </location>
    <ligand>
        <name>pyridoxal 5'-phosphate</name>
        <dbReference type="ChEBI" id="CHEBI:597326"/>
    </ligand>
</feature>
<feature type="binding site" description="via persulfide group" evidence="1">
    <location>
        <position position="328"/>
    </location>
    <ligand>
        <name>[2Fe-2S] cluster</name>
        <dbReference type="ChEBI" id="CHEBI:190135"/>
        <note>ligand shared with IscU</note>
    </ligand>
</feature>
<feature type="modified residue" description="N6-(pyridoxal phosphate)lysine" evidence="1">
    <location>
        <position position="206"/>
    </location>
</feature>
<dbReference type="EC" id="2.8.1.7" evidence="1"/>
<dbReference type="EMBL" id="CP000783">
    <property type="protein sequence ID" value="ABU75998.1"/>
    <property type="molecule type" value="Genomic_DNA"/>
</dbReference>
<dbReference type="RefSeq" id="WP_007777299.1">
    <property type="nucleotide sequence ID" value="NC_009778.1"/>
</dbReference>
<dbReference type="SMR" id="A7MGX8"/>
<dbReference type="GeneID" id="92805305"/>
<dbReference type="KEGG" id="esa:ESA_00721"/>
<dbReference type="HOGENOM" id="CLU_003433_0_2_6"/>
<dbReference type="UniPathway" id="UPA00266"/>
<dbReference type="Proteomes" id="UP000000260">
    <property type="component" value="Chromosome"/>
</dbReference>
<dbReference type="GO" id="GO:1990221">
    <property type="term" value="C:L-cysteine desulfurase complex"/>
    <property type="evidence" value="ECO:0007669"/>
    <property type="project" value="UniProtKB-ARBA"/>
</dbReference>
<dbReference type="GO" id="GO:0051537">
    <property type="term" value="F:2 iron, 2 sulfur cluster binding"/>
    <property type="evidence" value="ECO:0007669"/>
    <property type="project" value="UniProtKB-UniRule"/>
</dbReference>
<dbReference type="GO" id="GO:0031071">
    <property type="term" value="F:cysteine desulfurase activity"/>
    <property type="evidence" value="ECO:0007669"/>
    <property type="project" value="UniProtKB-UniRule"/>
</dbReference>
<dbReference type="GO" id="GO:0046872">
    <property type="term" value="F:metal ion binding"/>
    <property type="evidence" value="ECO:0007669"/>
    <property type="project" value="UniProtKB-KW"/>
</dbReference>
<dbReference type="GO" id="GO:0030170">
    <property type="term" value="F:pyridoxal phosphate binding"/>
    <property type="evidence" value="ECO:0007669"/>
    <property type="project" value="UniProtKB-UniRule"/>
</dbReference>
<dbReference type="GO" id="GO:0044571">
    <property type="term" value="P:[2Fe-2S] cluster assembly"/>
    <property type="evidence" value="ECO:0007669"/>
    <property type="project" value="UniProtKB-UniRule"/>
</dbReference>
<dbReference type="FunFam" id="3.40.640.10:FF:000003">
    <property type="entry name" value="Cysteine desulfurase IscS"/>
    <property type="match status" value="1"/>
</dbReference>
<dbReference type="FunFam" id="3.90.1150.10:FF:000002">
    <property type="entry name" value="Cysteine desulfurase IscS"/>
    <property type="match status" value="1"/>
</dbReference>
<dbReference type="Gene3D" id="3.90.1150.10">
    <property type="entry name" value="Aspartate Aminotransferase, domain 1"/>
    <property type="match status" value="1"/>
</dbReference>
<dbReference type="Gene3D" id="3.40.640.10">
    <property type="entry name" value="Type I PLP-dependent aspartate aminotransferase-like (Major domain)"/>
    <property type="match status" value="1"/>
</dbReference>
<dbReference type="HAMAP" id="MF_00331">
    <property type="entry name" value="Cys_desulf_IscS"/>
    <property type="match status" value="1"/>
</dbReference>
<dbReference type="InterPro" id="IPR000192">
    <property type="entry name" value="Aminotrans_V_dom"/>
</dbReference>
<dbReference type="InterPro" id="IPR020578">
    <property type="entry name" value="Aminotrans_V_PyrdxlP_BS"/>
</dbReference>
<dbReference type="InterPro" id="IPR010240">
    <property type="entry name" value="Cys_deSase_IscS"/>
</dbReference>
<dbReference type="InterPro" id="IPR016454">
    <property type="entry name" value="Cysteine_dSase"/>
</dbReference>
<dbReference type="InterPro" id="IPR015424">
    <property type="entry name" value="PyrdxlP-dep_Trfase"/>
</dbReference>
<dbReference type="InterPro" id="IPR015421">
    <property type="entry name" value="PyrdxlP-dep_Trfase_major"/>
</dbReference>
<dbReference type="InterPro" id="IPR015422">
    <property type="entry name" value="PyrdxlP-dep_Trfase_small"/>
</dbReference>
<dbReference type="NCBIfam" id="TIGR02006">
    <property type="entry name" value="IscS"/>
    <property type="match status" value="1"/>
</dbReference>
<dbReference type="NCBIfam" id="NF002806">
    <property type="entry name" value="PRK02948.1"/>
    <property type="match status" value="1"/>
</dbReference>
<dbReference type="NCBIfam" id="NF010611">
    <property type="entry name" value="PRK14012.1"/>
    <property type="match status" value="1"/>
</dbReference>
<dbReference type="PANTHER" id="PTHR11601:SF34">
    <property type="entry name" value="CYSTEINE DESULFURASE"/>
    <property type="match status" value="1"/>
</dbReference>
<dbReference type="PANTHER" id="PTHR11601">
    <property type="entry name" value="CYSTEINE DESULFURYLASE FAMILY MEMBER"/>
    <property type="match status" value="1"/>
</dbReference>
<dbReference type="Pfam" id="PF00266">
    <property type="entry name" value="Aminotran_5"/>
    <property type="match status" value="1"/>
</dbReference>
<dbReference type="PIRSF" id="PIRSF005572">
    <property type="entry name" value="NifS"/>
    <property type="match status" value="1"/>
</dbReference>
<dbReference type="SUPFAM" id="SSF53383">
    <property type="entry name" value="PLP-dependent transferases"/>
    <property type="match status" value="1"/>
</dbReference>
<dbReference type="PROSITE" id="PS00595">
    <property type="entry name" value="AA_TRANSFER_CLASS_5"/>
    <property type="match status" value="1"/>
</dbReference>
<protein>
    <recommendedName>
        <fullName evidence="1">Cysteine desulfurase IscS</fullName>
        <ecNumber evidence="1">2.8.1.7</ecNumber>
    </recommendedName>
</protein>
<sequence>MKLPIYLDYSATTPVDPRVAEKMMQFLTMDGTFGNPASRSHRFGWQAEEAVDIARNQVADLIGADPREIVFTSGATESDNLAIKGAANFYQKKGKHIITSKTEHKAVLDTCRQLEREGFEVTYLAPQSNGIIDLKELEAAMRDDTILVSIMHVNNEIGVVQDIATIGEMCRARGIIYHVDATQSVGKLPIDLTQLKVDLMSFTGHKIYGPKGIGALYVRRKPRIRIEAQMHGGGHERGMRSGTLPVHQIVGMGEAYRIAKEEMASEMERLRGLRNRLWNGIKDIEEVYLNGDLEQGVPTILNVSFNYVEGESLIMALKDLAVSSGSACTSASLEPSYVLRALGMNDELAHSSIRFSLGRFTTEEEIDYTIELVRKSIGRLRDLSPLWEMFKQGVDLTTIEWAHH</sequence>
<evidence type="ECO:0000255" key="1">
    <source>
        <dbReference type="HAMAP-Rule" id="MF_00331"/>
    </source>
</evidence>
<gene>
    <name evidence="1" type="primary">iscS</name>
    <name type="ordered locus">ESA_00721</name>
</gene>
<name>ISCS_CROS8</name>
<organism>
    <name type="scientific">Cronobacter sakazakii (strain ATCC BAA-894)</name>
    <name type="common">Enterobacter sakazakii</name>
    <dbReference type="NCBI Taxonomy" id="290339"/>
    <lineage>
        <taxon>Bacteria</taxon>
        <taxon>Pseudomonadati</taxon>
        <taxon>Pseudomonadota</taxon>
        <taxon>Gammaproteobacteria</taxon>
        <taxon>Enterobacterales</taxon>
        <taxon>Enterobacteriaceae</taxon>
        <taxon>Cronobacter</taxon>
    </lineage>
</organism>
<reference key="1">
    <citation type="journal article" date="2010" name="PLoS ONE">
        <title>Genome sequence of Cronobacter sakazakii BAA-894 and comparative genomic hybridization analysis with other Cronobacter species.</title>
        <authorList>
            <person name="Kucerova E."/>
            <person name="Clifton S.W."/>
            <person name="Xia X.Q."/>
            <person name="Long F."/>
            <person name="Porwollik S."/>
            <person name="Fulton L."/>
            <person name="Fronick C."/>
            <person name="Minx P."/>
            <person name="Kyung K."/>
            <person name="Warren W."/>
            <person name="Fulton R."/>
            <person name="Feng D."/>
            <person name="Wollam A."/>
            <person name="Shah N."/>
            <person name="Bhonagiri V."/>
            <person name="Nash W.E."/>
            <person name="Hallsworth-Pepin K."/>
            <person name="Wilson R.K."/>
            <person name="McClelland M."/>
            <person name="Forsythe S.J."/>
        </authorList>
    </citation>
    <scope>NUCLEOTIDE SEQUENCE [LARGE SCALE GENOMIC DNA]</scope>
    <source>
        <strain>ATCC BAA-894</strain>
    </source>
</reference>
<proteinExistence type="inferred from homology"/>